<accession>Q9UHC1</accession>
<accession>P49751</accession>
<accession>Q56DK9</accession>
<accession>Q9P292</accession>
<accession>Q9UHC0</accession>
<protein>
    <recommendedName>
        <fullName>DNA mismatch repair protein Mlh3</fullName>
    </recommendedName>
    <alternativeName>
        <fullName>MutL protein homolog 3</fullName>
    </alternativeName>
</protein>
<sequence length="1453" mass="163711">MIKCLSVEVQAKLRSGLAISSLGQCVEELALNSIDAEAKCVAVRVNMETFQVQVIDNGFGMGSDDVEKVGNRYFTSKCHSVQDLENPRFYGFRGEALANIADMASAVEISSKKNRTMKTFVKLFQSGKALKACEADVTRASAGTTVTVYNLFYQLPVRRKCMDPRLEFEKVRQRIEALSLMHPSISFSLRNDVSGSMVLQLPKTKDVCSRFCQIYGLGKSQKLREISFKYKEFELSGYISSEAHYNKNMQFLFVNKRLVLRTKLHKLIDFLLRKESIICKPKNGPTSRQMNSSLRHRSTPELYGIYVINVQCQFCEYDVCMEPAKTLIEFQNWDTLLFCIQEGVKMFLKQEKLFVELSGEDIKEFSEDNGFSLFDATLQKRVTSDERSNFQEACNNILDSYEMFNLQSKAVKRKTTAENVNTQSSRDSEATRKNTNDAFLYIYESGGPGHSKMTEPSLQNKDSSCSESKMLEQETIVASEAGENEKHKKSFLEHSSLENPCGTSLEMFLSPFQTPCHFEESGQDLEIWKESTTVNGMAANILKNNRIQNQPKRFKDATEVGCQPLPFATTLWGVHSAQTEKEKKKESSNCGRRNVFSYGRVKLCSTGFITHVVQNEKTKSTETEHSFKNYVRPGPTRAQETFGNRTRHSVETPDIKDLASTLSKESGQLPNKKNCRTNISYGLENEPTATYTMFSAFQEGSKKSQTDCILSDTSPSFPWYRHVSNDSRKTDKLIGFSKPIVRKKLSLSSQLGSLEKFKRQYGKVENPLDTEVEESNGVTTNLSLQVEPDILLKDKNRLENSDVCKITTMEHSDSDSSCQPASHILNSEKFPFSKDEDCLEQQMPSLRESPMTLKELSLFNRKPLDLEKSSESLASKLSRLKGSERETQTMGMMSRFNELPNSDSSRKDSKLCSVLTQDFCMLFNNKHEKTENGVIPTSDSATQDNSFNKNSKTHSNSNTTENCVISETPLVLPYNNSKVTGKDSDVLIRASEQQIGSLDSPSGMLMNPVEDATGDQNGICFQSEESKARACSETEESNTCCSDWQRHFDVALGRMVYVNKMTGLSTFIAPTEDIQAACTKDLTTVAVDVVLENGSQYRCQPFRSDLVLPFLPRARAERTVMRQDNRDTVDDTVSSESLQSLFSEWDNPVFARYPEVAVDVSSGQAESLAVKIHNILYPYRFTKGMIHSMQVLQQVDNKFIACLMSTKTEENGEAGGNLLVLVDQHAAHERIRLEQLIIDSYEKQQAQGSGRKKLLSSTLIPPLEITVTEEQRRLLWCYHKNLEDLGLEFVFPDTSDSLVLVGKVPLCFVEREANELRRGRSTVTKSIVEEFIREQLELLQTTGGIQGTLPLTVQKVLASQACHGAIKFNDGLSLQESCRLIEALSSCQLPFQCAHGRPSMLPLADIDHLEQEKQIKPNLTKLRKMAQAWRLFGKAECDTRQSLQQSMPPCEPP</sequence>
<proteinExistence type="evidence at protein level"/>
<organism>
    <name type="scientific">Homo sapiens</name>
    <name type="common">Human</name>
    <dbReference type="NCBI Taxonomy" id="9606"/>
    <lineage>
        <taxon>Eukaryota</taxon>
        <taxon>Metazoa</taxon>
        <taxon>Chordata</taxon>
        <taxon>Craniata</taxon>
        <taxon>Vertebrata</taxon>
        <taxon>Euteleostomi</taxon>
        <taxon>Mammalia</taxon>
        <taxon>Eutheria</taxon>
        <taxon>Euarchontoglires</taxon>
        <taxon>Primates</taxon>
        <taxon>Haplorrhini</taxon>
        <taxon>Catarrhini</taxon>
        <taxon>Hominidae</taxon>
        <taxon>Homo</taxon>
    </lineage>
</organism>
<name>MLH3_HUMAN</name>
<keyword id="KW-0025">Alternative splicing</keyword>
<keyword id="KW-0225">Disease variant</keyword>
<keyword id="KW-0227">DNA damage</keyword>
<keyword id="KW-0234">DNA repair</keyword>
<keyword id="KW-0362">Hereditary nonpolyposis colorectal cancer</keyword>
<keyword id="KW-0539">Nucleus</keyword>
<keyword id="KW-1267">Proteomics identification</keyword>
<keyword id="KW-1185">Reference proteome</keyword>
<gene>
    <name type="primary">MLH3</name>
</gene>
<dbReference type="EMBL" id="AF195657">
    <property type="protein sequence ID" value="AAF23904.1"/>
    <property type="molecule type" value="mRNA"/>
</dbReference>
<dbReference type="EMBL" id="AF195658">
    <property type="protein sequence ID" value="AAF23905.1"/>
    <property type="molecule type" value="Genomic_DNA"/>
</dbReference>
<dbReference type="EMBL" id="AB039667">
    <property type="protein sequence ID" value="BAA92353.1"/>
    <property type="molecule type" value="mRNA"/>
</dbReference>
<dbReference type="EMBL" id="AY963685">
    <property type="protein sequence ID" value="AAX59030.1"/>
    <property type="molecule type" value="Genomic_DNA"/>
</dbReference>
<dbReference type="EMBL" id="AL049780">
    <property type="status" value="NOT_ANNOTATED_CDS"/>
    <property type="molecule type" value="Genomic_DNA"/>
</dbReference>
<dbReference type="EMBL" id="L40399">
    <property type="protein sequence ID" value="AAC42005.1"/>
    <property type="status" value="ALT_SEQ"/>
    <property type="molecule type" value="mRNA"/>
</dbReference>
<dbReference type="CCDS" id="CCDS32123.1">
    <molecule id="Q9UHC1-1"/>
</dbReference>
<dbReference type="CCDS" id="CCDS9837.1">
    <molecule id="Q9UHC1-2"/>
</dbReference>
<dbReference type="RefSeq" id="NP_001035197.1">
    <molecule id="Q9UHC1-1"/>
    <property type="nucleotide sequence ID" value="NM_001040108.2"/>
</dbReference>
<dbReference type="RefSeq" id="NP_055196.2">
    <molecule id="Q9UHC1-2"/>
    <property type="nucleotide sequence ID" value="NM_014381.3"/>
</dbReference>
<dbReference type="RefSeq" id="XP_006720179.1">
    <molecule id="Q9UHC1-1"/>
    <property type="nucleotide sequence ID" value="XM_006720116.5"/>
</dbReference>
<dbReference type="RefSeq" id="XP_016876708.1">
    <molecule id="Q9UHC1-2"/>
    <property type="nucleotide sequence ID" value="XM_017021219.3"/>
</dbReference>
<dbReference type="SMR" id="Q9UHC1"/>
<dbReference type="BioGRID" id="117961">
    <property type="interactions" value="57"/>
</dbReference>
<dbReference type="ComplexPortal" id="CPX-9961">
    <property type="entry name" value="MutLgamma endonuclease complex"/>
</dbReference>
<dbReference type="FunCoup" id="Q9UHC1">
    <property type="interactions" value="1826"/>
</dbReference>
<dbReference type="IntAct" id="Q9UHC1">
    <property type="interactions" value="47"/>
</dbReference>
<dbReference type="MINT" id="Q9UHC1"/>
<dbReference type="STRING" id="9606.ENSP00000348020"/>
<dbReference type="CarbonylDB" id="Q9UHC1"/>
<dbReference type="GlyGen" id="Q9UHC1">
    <property type="glycosylation" value="2 sites, 1 N-linked glycan (1 site)"/>
</dbReference>
<dbReference type="iPTMnet" id="Q9UHC1"/>
<dbReference type="PhosphoSitePlus" id="Q9UHC1"/>
<dbReference type="BioMuta" id="MLH3"/>
<dbReference type="DMDM" id="317373417"/>
<dbReference type="jPOST" id="Q9UHC1"/>
<dbReference type="MassIVE" id="Q9UHC1"/>
<dbReference type="PaxDb" id="9606-ENSP00000348020"/>
<dbReference type="PeptideAtlas" id="Q9UHC1"/>
<dbReference type="ProteomicsDB" id="84305">
    <molecule id="Q9UHC1-1"/>
</dbReference>
<dbReference type="ProteomicsDB" id="84306">
    <molecule id="Q9UHC1-2"/>
</dbReference>
<dbReference type="Antibodypedia" id="25763">
    <property type="antibodies" value="154 antibodies from 27 providers"/>
</dbReference>
<dbReference type="DNASU" id="27030"/>
<dbReference type="Ensembl" id="ENST00000355774.7">
    <molecule id="Q9UHC1-1"/>
    <property type="protein sequence ID" value="ENSP00000348020.2"/>
    <property type="gene ID" value="ENSG00000119684.16"/>
</dbReference>
<dbReference type="Ensembl" id="ENST00000380968.6">
    <molecule id="Q9UHC1-2"/>
    <property type="protein sequence ID" value="ENSP00000370355.3"/>
    <property type="gene ID" value="ENSG00000119684.16"/>
</dbReference>
<dbReference type="GeneID" id="27030"/>
<dbReference type="KEGG" id="hsa:27030"/>
<dbReference type="MANE-Select" id="ENST00000355774.7">
    <property type="protein sequence ID" value="ENSP00000348020.2"/>
    <property type="RefSeq nucleotide sequence ID" value="NM_001040108.2"/>
    <property type="RefSeq protein sequence ID" value="NP_001035197.1"/>
</dbReference>
<dbReference type="UCSC" id="uc001xrd.1">
    <molecule id="Q9UHC1-1"/>
    <property type="organism name" value="human"/>
</dbReference>
<dbReference type="AGR" id="HGNC:7128"/>
<dbReference type="CTD" id="27030"/>
<dbReference type="DisGeNET" id="27030"/>
<dbReference type="GeneCards" id="MLH3"/>
<dbReference type="HGNC" id="HGNC:7128">
    <property type="gene designation" value="MLH3"/>
</dbReference>
<dbReference type="HPA" id="ENSG00000119684">
    <property type="expression patterns" value="Low tissue specificity"/>
</dbReference>
<dbReference type="MalaCards" id="MLH3"/>
<dbReference type="MIM" id="114500">
    <property type="type" value="phenotype"/>
</dbReference>
<dbReference type="MIM" id="604395">
    <property type="type" value="gene"/>
</dbReference>
<dbReference type="MIM" id="614385">
    <property type="type" value="phenotype"/>
</dbReference>
<dbReference type="neXtProt" id="NX_Q9UHC1"/>
<dbReference type="OpenTargets" id="ENSG00000119684"/>
<dbReference type="PharmGKB" id="PA30845"/>
<dbReference type="VEuPathDB" id="HostDB:ENSG00000119684"/>
<dbReference type="eggNOG" id="KOG1977">
    <property type="taxonomic scope" value="Eukaryota"/>
</dbReference>
<dbReference type="GeneTree" id="ENSGT00800000124176"/>
<dbReference type="HOGENOM" id="CLU_002376_0_0_1"/>
<dbReference type="InParanoid" id="Q9UHC1"/>
<dbReference type="OMA" id="HIGREGH"/>
<dbReference type="OrthoDB" id="429932at2759"/>
<dbReference type="PAN-GO" id="Q9UHC1">
    <property type="GO annotations" value="3 GO annotations based on evolutionary models"/>
</dbReference>
<dbReference type="PhylomeDB" id="Q9UHC1"/>
<dbReference type="TreeFam" id="TF329597"/>
<dbReference type="PathwayCommons" id="Q9UHC1"/>
<dbReference type="Reactome" id="R-HSA-912446">
    <property type="pathway name" value="Meiotic recombination"/>
</dbReference>
<dbReference type="SignaLink" id="Q9UHC1"/>
<dbReference type="BioGRID-ORCS" id="27030">
    <property type="hits" value="15 hits in 1154 CRISPR screens"/>
</dbReference>
<dbReference type="CD-CODE" id="91857CE7">
    <property type="entry name" value="Nucleolus"/>
</dbReference>
<dbReference type="ChiTaRS" id="MLH3">
    <property type="organism name" value="human"/>
</dbReference>
<dbReference type="GeneWiki" id="MLH3"/>
<dbReference type="GenomeRNAi" id="27030"/>
<dbReference type="Pharos" id="Q9UHC1">
    <property type="development level" value="Tbio"/>
</dbReference>
<dbReference type="PRO" id="PR:Q9UHC1"/>
<dbReference type="Proteomes" id="UP000005640">
    <property type="component" value="Chromosome 14"/>
</dbReference>
<dbReference type="RNAct" id="Q9UHC1">
    <property type="molecule type" value="protein"/>
</dbReference>
<dbReference type="Bgee" id="ENSG00000119684">
    <property type="expression patterns" value="Expressed in monocyte and 191 other cell types or tissues"/>
</dbReference>
<dbReference type="ExpressionAtlas" id="Q9UHC1">
    <property type="expression patterns" value="baseline and differential"/>
</dbReference>
<dbReference type="GO" id="GO:0005712">
    <property type="term" value="C:chiasma"/>
    <property type="evidence" value="ECO:0007669"/>
    <property type="project" value="Ensembl"/>
</dbReference>
<dbReference type="GO" id="GO:0001673">
    <property type="term" value="C:male germ cell nucleus"/>
    <property type="evidence" value="ECO:0007669"/>
    <property type="project" value="Ensembl"/>
</dbReference>
<dbReference type="GO" id="GO:0032300">
    <property type="term" value="C:mismatch repair complex"/>
    <property type="evidence" value="ECO:0000318"/>
    <property type="project" value="GO_Central"/>
</dbReference>
<dbReference type="GO" id="GO:0005654">
    <property type="term" value="C:nucleoplasm"/>
    <property type="evidence" value="ECO:0000314"/>
    <property type="project" value="HPA"/>
</dbReference>
<dbReference type="GO" id="GO:0005634">
    <property type="term" value="C:nucleus"/>
    <property type="evidence" value="ECO:0000304"/>
    <property type="project" value="ProtInc"/>
</dbReference>
<dbReference type="GO" id="GO:0000795">
    <property type="term" value="C:synaptonemal complex"/>
    <property type="evidence" value="ECO:0007669"/>
    <property type="project" value="Ensembl"/>
</dbReference>
<dbReference type="GO" id="GO:0005524">
    <property type="term" value="F:ATP binding"/>
    <property type="evidence" value="ECO:0007669"/>
    <property type="project" value="InterPro"/>
</dbReference>
<dbReference type="GO" id="GO:0016887">
    <property type="term" value="F:ATP hydrolysis activity"/>
    <property type="evidence" value="ECO:0000318"/>
    <property type="project" value="GO_Central"/>
</dbReference>
<dbReference type="GO" id="GO:0140664">
    <property type="term" value="F:ATP-dependent DNA damage sensor activity"/>
    <property type="evidence" value="ECO:0007669"/>
    <property type="project" value="InterPro"/>
</dbReference>
<dbReference type="GO" id="GO:0019237">
    <property type="term" value="F:centromeric DNA binding"/>
    <property type="evidence" value="ECO:0007669"/>
    <property type="project" value="Ensembl"/>
</dbReference>
<dbReference type="GO" id="GO:0003682">
    <property type="term" value="F:chromatin binding"/>
    <property type="evidence" value="ECO:0007669"/>
    <property type="project" value="Ensembl"/>
</dbReference>
<dbReference type="GO" id="GO:0030983">
    <property type="term" value="F:mismatched DNA binding"/>
    <property type="evidence" value="ECO:0007669"/>
    <property type="project" value="InterPro"/>
</dbReference>
<dbReference type="GO" id="GO:0003696">
    <property type="term" value="F:satellite DNA binding"/>
    <property type="evidence" value="ECO:0000304"/>
    <property type="project" value="ProtInc"/>
</dbReference>
<dbReference type="GO" id="GO:0007144">
    <property type="term" value="P:female meiosis I"/>
    <property type="evidence" value="ECO:0007669"/>
    <property type="project" value="Ensembl"/>
</dbReference>
<dbReference type="GO" id="GO:0007140">
    <property type="term" value="P:male meiotic nuclear division"/>
    <property type="evidence" value="ECO:0007669"/>
    <property type="project" value="Ensembl"/>
</dbReference>
<dbReference type="GO" id="GO:0006298">
    <property type="term" value="P:mismatch repair"/>
    <property type="evidence" value="ECO:0000318"/>
    <property type="project" value="GO_Central"/>
</dbReference>
<dbReference type="GO" id="GO:0008104">
    <property type="term" value="P:protein localization"/>
    <property type="evidence" value="ECO:0007669"/>
    <property type="project" value="Ensembl"/>
</dbReference>
<dbReference type="GO" id="GO:0007131">
    <property type="term" value="P:reciprocal meiotic recombination"/>
    <property type="evidence" value="ECO:0000303"/>
    <property type="project" value="UniProtKB"/>
</dbReference>
<dbReference type="GO" id="GO:0007130">
    <property type="term" value="P:synaptonemal complex assembly"/>
    <property type="evidence" value="ECO:0007669"/>
    <property type="project" value="Ensembl"/>
</dbReference>
<dbReference type="CDD" id="cd16926">
    <property type="entry name" value="HATPase_MutL-MLH-PMS-like"/>
    <property type="match status" value="1"/>
</dbReference>
<dbReference type="CDD" id="cd03486">
    <property type="entry name" value="MutL_Trans_MLH3"/>
    <property type="match status" value="1"/>
</dbReference>
<dbReference type="FunFam" id="3.30.1370.100:FF:000003">
    <property type="entry name" value="DNA mismatch repair protein Mlh3"/>
    <property type="match status" value="1"/>
</dbReference>
<dbReference type="FunFam" id="3.30.230.10:FF:000028">
    <property type="entry name" value="DNA mismatch repair protein Mlh3"/>
    <property type="match status" value="1"/>
</dbReference>
<dbReference type="FunFam" id="3.30.565.10:FF:000031">
    <property type="entry name" value="DNA mismatch repair protein Mlh3"/>
    <property type="match status" value="1"/>
</dbReference>
<dbReference type="FunFam" id="3.30.1540.20:FF:000005">
    <property type="entry name" value="MutL homolog 3"/>
    <property type="match status" value="1"/>
</dbReference>
<dbReference type="Gene3D" id="3.30.230.10">
    <property type="match status" value="1"/>
</dbReference>
<dbReference type="Gene3D" id="3.30.565.10">
    <property type="entry name" value="Histidine kinase-like ATPase, C-terminal domain"/>
    <property type="match status" value="1"/>
</dbReference>
<dbReference type="Gene3D" id="3.30.1540.20">
    <property type="entry name" value="MutL, C-terminal domain, dimerisation subdomain"/>
    <property type="match status" value="1"/>
</dbReference>
<dbReference type="Gene3D" id="3.30.1370.100">
    <property type="entry name" value="MutL, C-terminal domain, regulatory subdomain"/>
    <property type="match status" value="1"/>
</dbReference>
<dbReference type="InterPro" id="IPR014762">
    <property type="entry name" value="DNA_mismatch_repair_CS"/>
</dbReference>
<dbReference type="InterPro" id="IPR013507">
    <property type="entry name" value="DNA_mismatch_S5_2-like"/>
</dbReference>
<dbReference type="InterPro" id="IPR036890">
    <property type="entry name" value="HATPase_C_sf"/>
</dbReference>
<dbReference type="InterPro" id="IPR002099">
    <property type="entry name" value="MutL/Mlh/PMS"/>
</dbReference>
<dbReference type="InterPro" id="IPR038973">
    <property type="entry name" value="MutL/Mlh/Pms-like"/>
</dbReference>
<dbReference type="InterPro" id="IPR014790">
    <property type="entry name" value="MutL_C"/>
</dbReference>
<dbReference type="InterPro" id="IPR042120">
    <property type="entry name" value="MutL_C_dimsub"/>
</dbReference>
<dbReference type="InterPro" id="IPR042121">
    <property type="entry name" value="MutL_C_regsub"/>
</dbReference>
<dbReference type="InterPro" id="IPR037198">
    <property type="entry name" value="MutL_C_sf"/>
</dbReference>
<dbReference type="InterPro" id="IPR020568">
    <property type="entry name" value="Ribosomal_Su5_D2-typ_SF"/>
</dbReference>
<dbReference type="InterPro" id="IPR014721">
    <property type="entry name" value="Ribsml_uS5_D2-typ_fold_subgr"/>
</dbReference>
<dbReference type="NCBIfam" id="TIGR00585">
    <property type="entry name" value="mutl"/>
    <property type="match status" value="1"/>
</dbReference>
<dbReference type="PANTHER" id="PTHR10073">
    <property type="entry name" value="DNA MISMATCH REPAIR PROTEIN MLH, PMS, MUTL"/>
    <property type="match status" value="1"/>
</dbReference>
<dbReference type="PANTHER" id="PTHR10073:SF47">
    <property type="entry name" value="DNA MISMATCH REPAIR PROTEIN MLH3"/>
    <property type="match status" value="1"/>
</dbReference>
<dbReference type="Pfam" id="PF01119">
    <property type="entry name" value="DNA_mis_repair"/>
    <property type="match status" value="1"/>
</dbReference>
<dbReference type="Pfam" id="PF13589">
    <property type="entry name" value="HATPase_c_3"/>
    <property type="match status" value="1"/>
</dbReference>
<dbReference type="Pfam" id="PF08676">
    <property type="entry name" value="MutL_C"/>
    <property type="match status" value="1"/>
</dbReference>
<dbReference type="SMART" id="SM01340">
    <property type="entry name" value="DNA_mis_repair"/>
    <property type="match status" value="1"/>
</dbReference>
<dbReference type="SMART" id="SM00853">
    <property type="entry name" value="MutL_C"/>
    <property type="match status" value="1"/>
</dbReference>
<dbReference type="SUPFAM" id="SSF55874">
    <property type="entry name" value="ATPase domain of HSP90 chaperone/DNA topoisomerase II/histidine kinase"/>
    <property type="match status" value="1"/>
</dbReference>
<dbReference type="SUPFAM" id="SSF118116">
    <property type="entry name" value="DNA mismatch repair protein MutL"/>
    <property type="match status" value="1"/>
</dbReference>
<dbReference type="SUPFAM" id="SSF54211">
    <property type="entry name" value="Ribosomal protein S5 domain 2-like"/>
    <property type="match status" value="1"/>
</dbReference>
<dbReference type="PROSITE" id="PS00058">
    <property type="entry name" value="DNA_MISMATCH_REPAIR_1"/>
    <property type="match status" value="1"/>
</dbReference>
<reference key="1">
    <citation type="journal article" date="2000" name="Nat. Genet.">
        <title>MLH3: a DNA mismatch repair gene associated with mammalian microsatellite instability.</title>
        <authorList>
            <person name="Lipkin S.M."/>
            <person name="Wang V."/>
            <person name="Jacoby R."/>
            <person name="Banerjee-Basu S."/>
            <person name="Baxevanis A.D."/>
            <person name="Lynch H.T."/>
            <person name="Elliott R.M."/>
            <person name="Collins F.S."/>
        </authorList>
    </citation>
    <scope>NUCLEOTIDE SEQUENCE [GENOMIC DNA / MRNA]</scope>
    <scope>ALTERNATIVE SPLICING</scope>
    <scope>VARIANTS ASP-826 AND LEU-844</scope>
</reference>
<reference key="2">
    <citation type="journal article" date="2001" name="Nucleic Acids Res.">
        <title>The interacting domains of three MutL heterodimers in man: hMLH1 interacts with 36 homologous amino acid residues within hMLH3, hPMS1 and hPMS2.</title>
        <authorList>
            <person name="Kondo E."/>
            <person name="Horii A."/>
            <person name="Fukushige S."/>
        </authorList>
    </citation>
    <scope>NUCLEOTIDE SEQUENCE [MRNA]</scope>
    <scope>INTERACTION WITH MLH1</scope>
    <scope>VARIANT ASP-826</scope>
</reference>
<reference key="3">
    <citation type="submission" date="2005-03" db="EMBL/GenBank/DDBJ databases">
        <authorList>
            <consortium name="NIEHS SNPs program"/>
        </authorList>
    </citation>
    <scope>NUCLEOTIDE SEQUENCE [GENOMIC DNA]</scope>
    <scope>VARIANTS GLY-93; SER-120; GLN-231; ILE-420; VAL-492; GLN-600; PRO-606; GLN-624; CYS-647; CYS-720; ILE-723; PHE-741; HIS-797; ASP-826; LEU-844; GLY-845; ILE-942; PRO-966; ASN-1073; GLU-1105; ASP-1163 AND ARG-1319</scope>
</reference>
<reference key="4">
    <citation type="journal article" date="2003" name="Nature">
        <title>The DNA sequence and analysis of human chromosome 14.</title>
        <authorList>
            <person name="Heilig R."/>
            <person name="Eckenberg R."/>
            <person name="Petit J.-L."/>
            <person name="Fonknechten N."/>
            <person name="Da Silva C."/>
            <person name="Cattolico L."/>
            <person name="Levy M."/>
            <person name="Barbe V."/>
            <person name="De Berardinis V."/>
            <person name="Ureta-Vidal A."/>
            <person name="Pelletier E."/>
            <person name="Vico V."/>
            <person name="Anthouard V."/>
            <person name="Rowen L."/>
            <person name="Madan A."/>
            <person name="Qin S."/>
            <person name="Sun H."/>
            <person name="Du H."/>
            <person name="Pepin K."/>
            <person name="Artiguenave F."/>
            <person name="Robert C."/>
            <person name="Cruaud C."/>
            <person name="Bruels T."/>
            <person name="Jaillon O."/>
            <person name="Friedlander L."/>
            <person name="Samson G."/>
            <person name="Brottier P."/>
            <person name="Cure S."/>
            <person name="Segurens B."/>
            <person name="Aniere F."/>
            <person name="Samain S."/>
            <person name="Crespeau H."/>
            <person name="Abbasi N."/>
            <person name="Aiach N."/>
            <person name="Boscus D."/>
            <person name="Dickhoff R."/>
            <person name="Dors M."/>
            <person name="Dubois I."/>
            <person name="Friedman C."/>
            <person name="Gouyvenoux M."/>
            <person name="James R."/>
            <person name="Madan A."/>
            <person name="Mairey-Estrada B."/>
            <person name="Mangenot S."/>
            <person name="Martins N."/>
            <person name="Menard M."/>
            <person name="Oztas S."/>
            <person name="Ratcliffe A."/>
            <person name="Shaffer T."/>
            <person name="Trask B."/>
            <person name="Vacherie B."/>
            <person name="Bellemere C."/>
            <person name="Belser C."/>
            <person name="Besnard-Gonnet M."/>
            <person name="Bartol-Mavel D."/>
            <person name="Boutard M."/>
            <person name="Briez-Silla S."/>
            <person name="Combette S."/>
            <person name="Dufosse-Laurent V."/>
            <person name="Ferron C."/>
            <person name="Lechaplais C."/>
            <person name="Louesse C."/>
            <person name="Muselet D."/>
            <person name="Magdelenat G."/>
            <person name="Pateau E."/>
            <person name="Petit E."/>
            <person name="Sirvain-Trukniewicz P."/>
            <person name="Trybou A."/>
            <person name="Vega-Czarny N."/>
            <person name="Bataille E."/>
            <person name="Bluet E."/>
            <person name="Bordelais I."/>
            <person name="Dubois M."/>
            <person name="Dumont C."/>
            <person name="Guerin T."/>
            <person name="Haffray S."/>
            <person name="Hammadi R."/>
            <person name="Muanga J."/>
            <person name="Pellouin V."/>
            <person name="Robert D."/>
            <person name="Wunderle E."/>
            <person name="Gauguet G."/>
            <person name="Roy A."/>
            <person name="Sainte-Marthe L."/>
            <person name="Verdier J."/>
            <person name="Verdier-Discala C."/>
            <person name="Hillier L.W."/>
            <person name="Fulton L."/>
            <person name="McPherson J."/>
            <person name="Matsuda F."/>
            <person name="Wilson R."/>
            <person name="Scarpelli C."/>
            <person name="Gyapay G."/>
            <person name="Wincker P."/>
            <person name="Saurin W."/>
            <person name="Quetier F."/>
            <person name="Waterston R."/>
            <person name="Hood L."/>
            <person name="Weissenbach J."/>
        </authorList>
    </citation>
    <scope>NUCLEOTIDE SEQUENCE [LARGE SCALE GENOMIC DNA]</scope>
</reference>
<reference key="5">
    <citation type="journal article" date="1995" name="Nature">
        <title>Cloning of a gene bearing missense mutations in early-onset familial Alzheimer's disease.</title>
        <authorList>
            <person name="Sherrington R."/>
            <person name="Rogaev E.I."/>
            <person name="Liang Y."/>
            <person name="Rogaeva E.A."/>
            <person name="Levesque G."/>
            <person name="Ikeda M."/>
            <person name="Chi H."/>
            <person name="Lin C."/>
            <person name="Li G."/>
            <person name="Holman K."/>
            <person name="Tsuda T."/>
            <person name="Mar L."/>
            <person name="Foncin J.-F."/>
            <person name="Bruni A.C."/>
            <person name="Montesi M.P."/>
            <person name="Sorbi S."/>
            <person name="Rainero I."/>
            <person name="Pinessi L."/>
            <person name="Nee L."/>
            <person name="Chumakov I."/>
            <person name="Pollen D."/>
            <person name="Brookes A."/>
            <person name="Sanseau P."/>
            <person name="Polinsky R.J."/>
            <person name="Wasco W."/>
            <person name="da Silva H.A.R."/>
            <person name="Haines J.L."/>
            <person name="Pericak-Vance M.A."/>
            <person name="Tanzi R.E."/>
            <person name="Roses A.D."/>
            <person name="Fraser P.E."/>
            <person name="Rommens J.M."/>
            <person name="St George-Hyslop P.H."/>
        </authorList>
    </citation>
    <scope>NUCLEOTIDE SEQUENCE [MRNA] OF 1189-1453</scope>
    <source>
        <tissue>Brain</tissue>
    </source>
</reference>
<reference key="6">
    <citation type="journal article" date="2001" name="Hum. Mutat.">
        <title>Germline and somatic mutation analyses in the DNA mismatch repair gene MLH3: evidence for somatic mutation in colorectal cancers.</title>
        <authorList>
            <person name="Lipkin S.M."/>
            <person name="Wang V."/>
            <person name="Stoler D.L."/>
            <person name="Anderson G.R."/>
            <person name="Kirsch I."/>
            <person name="Hadley D."/>
            <person name="Lynch H.T."/>
            <person name="Collins F.S."/>
        </authorList>
    </citation>
    <scope>INVOLVEMENT IN SOMATIC COLORECTAL CANCER</scope>
</reference>
<reference key="7">
    <citation type="journal article" date="2010" name="Mol. Cell">
        <title>A genetic screen identifies FAN1, a Fanconi anemia-associated nuclease necessary for DNA interstrand crosslink repair.</title>
        <authorList>
            <person name="Smogorzewska A."/>
            <person name="Desetty R."/>
            <person name="Saito T.T."/>
            <person name="Schlabach M."/>
            <person name="Lach F.P."/>
            <person name="Sowa M.E."/>
            <person name="Clark A.B."/>
            <person name="Kunkel T.A."/>
            <person name="Harper J.W."/>
            <person name="Colaiacovo M.P."/>
            <person name="Elledge S.J."/>
        </authorList>
    </citation>
    <scope>INTERACTION WITH MTMR15</scope>
</reference>
<reference key="8">
    <citation type="journal article" date="2001" name="Nat. Genet.">
        <title>A role for MLH3 in hereditary nonpolyposis colorectal cancer.</title>
        <authorList>
            <person name="Wu Y."/>
            <person name="Berends M.J.W."/>
            <person name="Sijmons R.H."/>
            <person name="Mensink R.G.J."/>
            <person name="Verlind E."/>
            <person name="Kooi K.A."/>
            <person name="van der Sluis T."/>
            <person name="Kempinga C."/>
            <person name="van der Zee A.G.J."/>
            <person name="Hollema H."/>
            <person name="Buys C.H.C.M."/>
            <person name="Kleibeuker J.H."/>
            <person name="Hofstra R.M.W."/>
        </authorList>
    </citation>
    <scope>VARIANTS HNPCC7 GLU-24; SER-499; GLN-624; CYS-647; GLY-817; SER-981; SER-1007; THR-1394 AND LYS-1451</scope>
</reference>
<comment type="function">
    <text>Probably involved in the repair of mismatches in DNA.</text>
</comment>
<comment type="subunit">
    <text evidence="3 6">Heterodimer of MLH1 and MLH3. Interacts with MTMR15/FAN1.</text>
</comment>
<comment type="interaction">
    <interactant intactId="EBI-3893094">
        <id>Q9UHC1</id>
    </interactant>
    <interactant intactId="EBI-744248">
        <id>P40692</id>
        <label>MLH1</label>
    </interactant>
    <organismsDiffer>false</organismsDiffer>
    <experiments>6</experiments>
</comment>
<comment type="interaction">
    <interactant intactId="EBI-9089845">
        <id>Q9UHC1-2</id>
    </interactant>
    <interactant intactId="EBI-10976677">
        <id>G5E9A7</id>
        <label>DMWD</label>
    </interactant>
    <organismsDiffer>false</organismsDiffer>
    <experiments>3</experiments>
</comment>
<comment type="interaction">
    <interactant intactId="EBI-9089845">
        <id>Q9UHC1-2</id>
    </interactant>
    <interactant intactId="EBI-5235340">
        <id>Q7Z699</id>
        <label>SPRED1</label>
    </interactant>
    <organismsDiffer>false</organismsDiffer>
    <experiments>3</experiments>
</comment>
<comment type="subcellular location">
    <subcellularLocation>
        <location evidence="8">Nucleus</location>
    </subcellularLocation>
</comment>
<comment type="alternative products">
    <event type="alternative splicing"/>
    <isoform>
        <id>Q9UHC1-1</id>
        <name>1</name>
        <sequence type="displayed"/>
    </isoform>
    <isoform>
        <id>Q9UHC1-2</id>
        <name>2</name>
        <sequence type="described" ref="VSP_003290"/>
    </isoform>
</comment>
<comment type="tissue specificity">
    <text>Ubiquitous.</text>
</comment>
<comment type="disease" evidence="5">
    <disease id="DI-00556">
        <name>Hereditary non-polyposis colorectal cancer 7</name>
        <acronym>HNPCC7</acronym>
        <description>An autosomal dominant disease associated with marked increase in cancer susceptibility. It is characterized by a familial predisposition to early-onset colorectal carcinoma (CRC) and extra-colonic tumors of the gastrointestinal, urological and female reproductive tracts. HNPCC is reported to be the most common form of inherited colorectal cancer in the Western world. Clinically, HNPCC is often divided into two subgroups. Type I is characterized by hereditary predisposition to colorectal cancer, a young age of onset, and carcinoma observed in the proximal colon. Type II is characterized by increased risk for cancers in certain tissues such as the uterus, ovary, breast, stomach, small intestine, skin, and larynx in addition to the colon. Diagnosis of classical HNPCC is based on the Amsterdam criteria: 3 or more relatives affected by colorectal cancer, one a first degree relative of the other two; 2 or more generation affected; 1 or more colorectal cancers presenting before 50 years of age; exclusion of hereditary polyposis syndromes. The term 'suspected HNPCC' or 'incomplete HNPCC' can be used to describe families who do not or only partially fulfill the Amsterdam criteria, but in whom a genetic basis for colon cancer is strongly suspected.</description>
        <dbReference type="MIM" id="614385"/>
    </disease>
    <text>The disease is caused by variants affecting the gene represented in this entry.</text>
</comment>
<comment type="disease" evidence="4">
    <disease id="DI-01359">
        <name>Colorectal cancer</name>
        <acronym>CRC</acronym>
        <description>A complex disease characterized by malignant lesions arising from the inner wall of the large intestine (the colon) and the rectum. Genetic alterations are often associated with progression from premalignant lesion (adenoma) to invasive adenocarcinoma. Risk factors for cancer of the colon and rectum include colon polyps, long-standing ulcerative colitis, and genetic family history.</description>
        <dbReference type="MIM" id="114500"/>
    </disease>
    <text>The disease is caused by variants affecting the gene represented in this entry.</text>
</comment>
<comment type="similarity">
    <text evidence="8">Belongs to the DNA mismatch repair MutL/HexB family.</text>
</comment>
<comment type="sequence caution" evidence="8">
    <conflict type="frameshift">
        <sequence resource="EMBL-CDS" id="AAC42005"/>
    </conflict>
</comment>
<comment type="sequence caution" evidence="8">
    <conflict type="miscellaneous discrepancy">
        <sequence resource="EMBL-CDS" id="AAC42005"/>
    </conflict>
    <text>Contaminating sequence. Sequence of unknown origin in the N-terminal part.</text>
</comment>
<feature type="chain" id="PRO_0000178003" description="DNA mismatch repair protein Mlh3">
    <location>
        <begin position="1"/>
        <end position="1453"/>
    </location>
</feature>
<feature type="region of interest" description="Disordered" evidence="1">
    <location>
        <begin position="624"/>
        <end position="650"/>
    </location>
</feature>
<feature type="region of interest" description="Disordered" evidence="1">
    <location>
        <begin position="933"/>
        <end position="960"/>
    </location>
</feature>
<feature type="compositionally biased region" description="Polar residues" evidence="1">
    <location>
        <begin position="935"/>
        <end position="944"/>
    </location>
</feature>
<feature type="compositionally biased region" description="Low complexity" evidence="1">
    <location>
        <begin position="945"/>
        <end position="960"/>
    </location>
</feature>
<feature type="splice variant" id="VSP_003290" description="In isoform 2." evidence="8">
    <location>
        <begin position="1215"/>
        <end position="1238"/>
    </location>
</feature>
<feature type="sequence variant" id="VAR_012946" description="In HNPCC7; dbSNP:rs28937870." evidence="5">
    <original>Q</original>
    <variation>E</variation>
    <location>
        <position position="24"/>
    </location>
</feature>
<feature type="sequence variant" id="VAR_023338" description="In dbSNP:rs28756978." evidence="7">
    <original>R</original>
    <variation>G</variation>
    <location>
        <position position="93"/>
    </location>
</feature>
<feature type="sequence variant" id="VAR_023339" description="In dbSNP:rs28756979." evidence="7">
    <original>F</original>
    <variation>S</variation>
    <location>
        <position position="120"/>
    </location>
</feature>
<feature type="sequence variant" id="VAR_023340" description="In dbSNP:rs28756981." evidence="7">
    <original>K</original>
    <variation>Q</variation>
    <location>
        <position position="231"/>
    </location>
</feature>
<feature type="sequence variant" id="VAR_023341" description="In dbSNP:rs28756982." evidence="7">
    <original>V</original>
    <variation>I</variation>
    <location>
        <position position="420"/>
    </location>
</feature>
<feature type="sequence variant" id="VAR_023342" description="In dbSNP:rs28756983." evidence="7">
    <original>L</original>
    <variation>V</variation>
    <location>
        <position position="492"/>
    </location>
</feature>
<feature type="sequence variant" id="VAR_010790" description="In dbSNP:rs760778201.">
    <original>H</original>
    <variation>R</variation>
    <location>
        <position position="494"/>
    </location>
</feature>
<feature type="sequence variant" id="VAR_012947" description="In HNPCC7; dbSNP:rs28937871." evidence="5">
    <original>N</original>
    <variation>S</variation>
    <location>
        <position position="499"/>
    </location>
</feature>
<feature type="sequence variant" id="VAR_023343" description="In dbSNP:rs28756984." evidence="7">
    <original>R</original>
    <variation>Q</variation>
    <location>
        <position position="600"/>
    </location>
</feature>
<feature type="sequence variant" id="VAR_023344" description="In dbSNP:rs28756985." evidence="7">
    <original>T</original>
    <variation>P</variation>
    <location>
        <position position="606"/>
    </location>
</feature>
<feature type="sequence variant" id="VAR_012948" description="In HNPCC7; dbSNP:rs28756986." evidence="5 7">
    <original>E</original>
    <variation>Q</variation>
    <location>
        <position position="624"/>
    </location>
</feature>
<feature type="sequence variant" id="VAR_012949" description="In HNPCC7; dbSNP:rs28756987." evidence="5 7">
    <original>R</original>
    <variation>C</variation>
    <location>
        <position position="647"/>
    </location>
</feature>
<feature type="sequence variant" id="VAR_023345" description="In dbSNP:rs28756988." evidence="7">
    <original>Y</original>
    <variation>C</variation>
    <location>
        <position position="720"/>
    </location>
</feature>
<feature type="sequence variant" id="VAR_023346" description="In dbSNP:rs28756989." evidence="7">
    <original>V</original>
    <variation>I</variation>
    <location>
        <position position="723"/>
    </location>
</feature>
<feature type="sequence variant" id="VAR_023347" description="In dbSNP:rs28756990." evidence="7">
    <original>V</original>
    <variation>F</variation>
    <location>
        <position position="741"/>
    </location>
</feature>
<feature type="sequence variant" id="VAR_023348" description="In dbSNP:rs28756991." evidence="7">
    <original>R</original>
    <variation>H</variation>
    <location>
        <position position="797"/>
    </location>
</feature>
<feature type="sequence variant" id="VAR_012950" description="In HNPCC7; dbSNP:rs143278116." evidence="5">
    <original>S</original>
    <variation>G</variation>
    <location>
        <position position="817"/>
    </location>
</feature>
<feature type="sequence variant" id="VAR_036781" description="In dbSNP:rs175081." evidence="2 3 7">
    <original>N</original>
    <variation>D</variation>
    <location>
        <position position="826"/>
    </location>
</feature>
<feature type="sequence variant" id="VAR_023349" description="In dbSNP:rs175080." evidence="2 7">
    <original>P</original>
    <variation>L</variation>
    <location>
        <position position="844"/>
    </location>
</feature>
<feature type="sequence variant" id="VAR_023350" description="In dbSNP:rs28756992." evidence="7">
    <original>S</original>
    <variation>G</variation>
    <location>
        <position position="845"/>
    </location>
</feature>
<feature type="sequence variant" id="VAR_023351" description="In dbSNP:rs17102999." evidence="7">
    <original>T</original>
    <variation>I</variation>
    <location>
        <position position="942"/>
    </location>
</feature>
<feature type="sequence variant" id="VAR_023352" description="In dbSNP:rs17782839." evidence="7">
    <original>S</original>
    <variation>P</variation>
    <location>
        <position position="966"/>
    </location>
</feature>
<feature type="sequence variant" id="VAR_012951" description="In HNPCC7; dbSNP:rs377337763." evidence="5">
    <original>G</original>
    <variation>S</variation>
    <location>
        <position position="981"/>
    </location>
</feature>
<feature type="sequence variant" id="VAR_012952" description="In HNPCC7; dbSNP:rs776639203." evidence="5">
    <original>N</original>
    <variation>S</variation>
    <location>
        <position position="1007"/>
    </location>
</feature>
<feature type="sequence variant" id="VAR_023353" description="In dbSNP:rs28756993." evidence="7">
    <original>D</original>
    <variation>N</variation>
    <location>
        <position position="1073"/>
    </location>
</feature>
<feature type="sequence variant" id="VAR_023354" description="In dbSNP:rs28757008." evidence="7">
    <original>D</original>
    <variation>E</variation>
    <location>
        <position position="1105"/>
    </location>
</feature>
<feature type="sequence variant" id="VAR_023355" description="In dbSNP:rs28757011." evidence="7">
    <original>G</original>
    <variation>D</variation>
    <location>
        <position position="1163"/>
    </location>
</feature>
<feature type="sequence variant" id="VAR_023356" description="In dbSNP:rs2139384512." evidence="7">
    <original>G</original>
    <variation>R</variation>
    <location>
        <position position="1319"/>
    </location>
</feature>
<feature type="sequence variant" id="VAR_012953" description="In HNPCC7; dbSNP:rs138006166." evidence="5">
    <original>A</original>
    <variation>T</variation>
    <location>
        <position position="1394"/>
    </location>
</feature>
<feature type="sequence variant" id="VAR_012954" description="In HNPCC7; dbSNP:rs28939071." evidence="5">
    <original>E</original>
    <variation>K</variation>
    <location>
        <position position="1451"/>
    </location>
</feature>
<evidence type="ECO:0000256" key="1">
    <source>
        <dbReference type="SAM" id="MobiDB-lite"/>
    </source>
</evidence>
<evidence type="ECO:0000269" key="2">
    <source>
    </source>
</evidence>
<evidence type="ECO:0000269" key="3">
    <source>
    </source>
</evidence>
<evidence type="ECO:0000269" key="4">
    <source>
    </source>
</evidence>
<evidence type="ECO:0000269" key="5">
    <source>
    </source>
</evidence>
<evidence type="ECO:0000269" key="6">
    <source>
    </source>
</evidence>
<evidence type="ECO:0000269" key="7">
    <source ref="3"/>
</evidence>
<evidence type="ECO:0000305" key="8"/>